<comment type="function">
    <text evidence="1">Catalyzes the hydrolysis of 6-phosphogluconolactone to 6-phosphogluconate.</text>
</comment>
<comment type="catalytic activity">
    <reaction evidence="1">
        <text>6-phospho-D-glucono-1,5-lactone + H2O = 6-phospho-D-gluconate + H(+)</text>
        <dbReference type="Rhea" id="RHEA:12556"/>
        <dbReference type="ChEBI" id="CHEBI:15377"/>
        <dbReference type="ChEBI" id="CHEBI:15378"/>
        <dbReference type="ChEBI" id="CHEBI:57955"/>
        <dbReference type="ChEBI" id="CHEBI:58759"/>
        <dbReference type="EC" id="3.1.1.31"/>
    </reaction>
</comment>
<comment type="pathway">
    <text evidence="1">Carbohydrate degradation; pentose phosphate pathway; D-ribulose 5-phosphate from D-glucose 6-phosphate (oxidative stage): step 2/3.</text>
</comment>
<comment type="similarity">
    <text evidence="1">Belongs to the cycloisomerase 2 family.</text>
</comment>
<name>6PGL_SALPB</name>
<sequence length="331" mass="36436">MKQTVYTASPESQQIHVWSLNHEGTLTLVQVVDVPGQVQPMVVSPDKRYLYVGVRPEFRVLAYRIAPDDGALTFAAESALPGSPTHISTDHHGRFVFVGSYNAGNVSVTRLQDGLPVELVDVVERLDGCHSANITPDNRTLWVPALKQDRICLFTLSDDGHLVAQEPAEVNTVEGAGPRHMVFHPNRQYAYCVNELNSSVDVWQLKNPHGEIECVQTLDMMPADFSDTRWAADIHITPDGRHLYACDRTASLITVFSVSEDGSVLSVEGFQPTEAQPRGFNIDNSGKYLIAAGQKSHHIAVYEITGTQGLLTEKGRYAVGQGPMWVVVNAY</sequence>
<evidence type="ECO:0000255" key="1">
    <source>
        <dbReference type="HAMAP-Rule" id="MF_01605"/>
    </source>
</evidence>
<protein>
    <recommendedName>
        <fullName evidence="1">6-phosphogluconolactonase</fullName>
        <shortName evidence="1">6-P-gluconolactonase</shortName>
        <ecNumber evidence="1">3.1.1.31</ecNumber>
    </recommendedName>
</protein>
<feature type="chain" id="PRO_1000088031" description="6-phosphogluconolactonase">
    <location>
        <begin position="1"/>
        <end position="331"/>
    </location>
</feature>
<reference key="1">
    <citation type="submission" date="2007-11" db="EMBL/GenBank/DDBJ databases">
        <authorList>
            <consortium name="The Salmonella enterica serovar Paratyphi B Genome Sequencing Project"/>
            <person name="McClelland M."/>
            <person name="Sanderson E.K."/>
            <person name="Porwollik S."/>
            <person name="Spieth J."/>
            <person name="Clifton W.S."/>
            <person name="Fulton R."/>
            <person name="Cordes M."/>
            <person name="Wollam A."/>
            <person name="Shah N."/>
            <person name="Pepin K."/>
            <person name="Bhonagiri V."/>
            <person name="Nash W."/>
            <person name="Johnson M."/>
            <person name="Thiruvilangam P."/>
            <person name="Wilson R."/>
        </authorList>
    </citation>
    <scope>NUCLEOTIDE SEQUENCE [LARGE SCALE GENOMIC DNA]</scope>
    <source>
        <strain>ATCC BAA-1250 / SPB7</strain>
    </source>
</reference>
<keyword id="KW-0119">Carbohydrate metabolism</keyword>
<keyword id="KW-0313">Glucose metabolism</keyword>
<keyword id="KW-0378">Hydrolase</keyword>
<accession>A9MTJ8</accession>
<proteinExistence type="inferred from homology"/>
<dbReference type="EC" id="3.1.1.31" evidence="1"/>
<dbReference type="EMBL" id="CP000886">
    <property type="protein sequence ID" value="ABX68113.1"/>
    <property type="molecule type" value="Genomic_DNA"/>
</dbReference>
<dbReference type="RefSeq" id="WP_000815474.1">
    <property type="nucleotide sequence ID" value="NC_010102.1"/>
</dbReference>
<dbReference type="SMR" id="A9MTJ8"/>
<dbReference type="KEGG" id="spq:SPAB_02735"/>
<dbReference type="PATRIC" id="fig|1016998.12.peg.2587"/>
<dbReference type="HOGENOM" id="CLU_038716_2_0_6"/>
<dbReference type="BioCyc" id="SENT1016998:SPAB_RS11115-MONOMER"/>
<dbReference type="UniPathway" id="UPA00115">
    <property type="reaction ID" value="UER00409"/>
</dbReference>
<dbReference type="Proteomes" id="UP000008556">
    <property type="component" value="Chromosome"/>
</dbReference>
<dbReference type="GO" id="GO:0005829">
    <property type="term" value="C:cytosol"/>
    <property type="evidence" value="ECO:0007669"/>
    <property type="project" value="TreeGrafter"/>
</dbReference>
<dbReference type="GO" id="GO:0017057">
    <property type="term" value="F:6-phosphogluconolactonase activity"/>
    <property type="evidence" value="ECO:0007669"/>
    <property type="project" value="UniProtKB-UniRule"/>
</dbReference>
<dbReference type="GO" id="GO:0006006">
    <property type="term" value="P:glucose metabolic process"/>
    <property type="evidence" value="ECO:0007669"/>
    <property type="project" value="UniProtKB-KW"/>
</dbReference>
<dbReference type="GO" id="GO:0009051">
    <property type="term" value="P:pentose-phosphate shunt, oxidative branch"/>
    <property type="evidence" value="ECO:0007669"/>
    <property type="project" value="UniProtKB-UniRule"/>
</dbReference>
<dbReference type="FunFam" id="2.130.10.10:FF:000051">
    <property type="entry name" value="6-phosphogluconolactonase"/>
    <property type="match status" value="1"/>
</dbReference>
<dbReference type="Gene3D" id="2.130.10.10">
    <property type="entry name" value="YVTN repeat-like/Quinoprotein amine dehydrogenase"/>
    <property type="match status" value="1"/>
</dbReference>
<dbReference type="HAMAP" id="MF_01605">
    <property type="entry name" value="6P_gluconolactonase"/>
    <property type="match status" value="1"/>
</dbReference>
<dbReference type="InterPro" id="IPR022528">
    <property type="entry name" value="6-phosphogluconolactonase_YbhE"/>
</dbReference>
<dbReference type="InterPro" id="IPR050282">
    <property type="entry name" value="Cycloisomerase_2"/>
</dbReference>
<dbReference type="InterPro" id="IPR019405">
    <property type="entry name" value="Lactonase_7-beta_prop"/>
</dbReference>
<dbReference type="InterPro" id="IPR011045">
    <property type="entry name" value="N2O_reductase_N"/>
</dbReference>
<dbReference type="InterPro" id="IPR015943">
    <property type="entry name" value="WD40/YVTN_repeat-like_dom_sf"/>
</dbReference>
<dbReference type="NCBIfam" id="NF008258">
    <property type="entry name" value="PRK11028.1"/>
    <property type="match status" value="1"/>
</dbReference>
<dbReference type="PANTHER" id="PTHR30344:SF1">
    <property type="entry name" value="6-PHOSPHOGLUCONOLACTONASE"/>
    <property type="match status" value="1"/>
</dbReference>
<dbReference type="PANTHER" id="PTHR30344">
    <property type="entry name" value="6-PHOSPHOGLUCONOLACTONASE-RELATED"/>
    <property type="match status" value="1"/>
</dbReference>
<dbReference type="Pfam" id="PF10282">
    <property type="entry name" value="Lactonase"/>
    <property type="match status" value="1"/>
</dbReference>
<dbReference type="SUPFAM" id="SSF50974">
    <property type="entry name" value="Nitrous oxide reductase, N-terminal domain"/>
    <property type="match status" value="2"/>
</dbReference>
<gene>
    <name evidence="1" type="primary">pgl</name>
    <name type="ordered locus">SPAB_02735</name>
</gene>
<organism>
    <name type="scientific">Salmonella paratyphi B (strain ATCC BAA-1250 / SPB7)</name>
    <dbReference type="NCBI Taxonomy" id="1016998"/>
    <lineage>
        <taxon>Bacteria</taxon>
        <taxon>Pseudomonadati</taxon>
        <taxon>Pseudomonadota</taxon>
        <taxon>Gammaproteobacteria</taxon>
        <taxon>Enterobacterales</taxon>
        <taxon>Enterobacteriaceae</taxon>
        <taxon>Salmonella</taxon>
    </lineage>
</organism>